<sequence>MQNLTVALDAMGGDFGPRVTVPAAVQALSHFPELKVILVGDQHQITQQLSLLGYSADTRLSIVHSDRVISNSEKPSLALRHSAGSSMGMAIDLVAENQADACVSGGNTGALMALSRFRLKLLPGIDRPALVSALPTISGRKTWMLDLGANVSSDADSLFQFAVMGAALAEQHLQQAPRVAILNIGAEEIKGNDLVKRCAEMLTQTQAINFIGYIEGNQLLTDAADVIVCDGFVGNVCLKACEGTAQLFIDKLKKSLLASSIKGWIARKLFSELFTELKTLNPDQYNGASLLGLRGIVIKSHGSADVSAVVNAISEAVHEVKRQVPSRISDRLEAVLLERHY</sequence>
<proteinExistence type="inferred from homology"/>
<evidence type="ECO:0000255" key="1">
    <source>
        <dbReference type="HAMAP-Rule" id="MF_00019"/>
    </source>
</evidence>
<protein>
    <recommendedName>
        <fullName evidence="1">Phosphate acyltransferase</fullName>
        <ecNumber evidence="1">2.3.1.274</ecNumber>
    </recommendedName>
    <alternativeName>
        <fullName evidence="1">Acyl-ACP phosphotransacylase</fullName>
    </alternativeName>
    <alternativeName>
        <fullName evidence="1">Acyl-[acyl-carrier-protein]--phosphate acyltransferase</fullName>
    </alternativeName>
    <alternativeName>
        <fullName evidence="1">Phosphate-acyl-ACP acyltransferase</fullName>
    </alternativeName>
</protein>
<reference key="1">
    <citation type="submission" date="2007-03" db="EMBL/GenBank/DDBJ databases">
        <authorList>
            <person name="Heidelberg J."/>
        </authorList>
    </citation>
    <scope>NUCLEOTIDE SEQUENCE [LARGE SCALE GENOMIC DNA]</scope>
    <source>
        <strain>ATCC 39541 / Classical Ogawa 395 / O395</strain>
    </source>
</reference>
<reference key="2">
    <citation type="journal article" date="2008" name="PLoS ONE">
        <title>A recalibrated molecular clock and independent origins for the cholera pandemic clones.</title>
        <authorList>
            <person name="Feng L."/>
            <person name="Reeves P.R."/>
            <person name="Lan R."/>
            <person name="Ren Y."/>
            <person name="Gao C."/>
            <person name="Zhou Z."/>
            <person name="Ren Y."/>
            <person name="Cheng J."/>
            <person name="Wang W."/>
            <person name="Wang J."/>
            <person name="Qian W."/>
            <person name="Li D."/>
            <person name="Wang L."/>
        </authorList>
    </citation>
    <scope>NUCLEOTIDE SEQUENCE [LARGE SCALE GENOMIC DNA]</scope>
    <source>
        <strain>ATCC 39541 / Classical Ogawa 395 / O395</strain>
    </source>
</reference>
<feature type="chain" id="PRO_1000070993" description="Phosphate acyltransferase">
    <location>
        <begin position="1"/>
        <end position="341"/>
    </location>
</feature>
<gene>
    <name evidence="1" type="primary">plsX</name>
    <name type="ordered locus">VC0395_A1610</name>
    <name type="ordered locus">VC395_2139</name>
</gene>
<name>PLSX_VIBC3</name>
<dbReference type="EC" id="2.3.1.274" evidence="1"/>
<dbReference type="EMBL" id="CP000627">
    <property type="protein sequence ID" value="ABQ21602.1"/>
    <property type="molecule type" value="Genomic_DNA"/>
</dbReference>
<dbReference type="EMBL" id="CP001235">
    <property type="protein sequence ID" value="ACP10131.1"/>
    <property type="molecule type" value="Genomic_DNA"/>
</dbReference>
<dbReference type="RefSeq" id="WP_001180565.1">
    <property type="nucleotide sequence ID" value="NZ_JAACZH010000001.1"/>
</dbReference>
<dbReference type="SMR" id="A5F6P0"/>
<dbReference type="KEGG" id="vco:VC0395_A1610"/>
<dbReference type="KEGG" id="vcr:VC395_2139"/>
<dbReference type="PATRIC" id="fig|345073.21.peg.2067"/>
<dbReference type="eggNOG" id="COG0416">
    <property type="taxonomic scope" value="Bacteria"/>
</dbReference>
<dbReference type="HOGENOM" id="CLU_039379_1_0_6"/>
<dbReference type="OrthoDB" id="9806408at2"/>
<dbReference type="UniPathway" id="UPA00085"/>
<dbReference type="Proteomes" id="UP000000249">
    <property type="component" value="Chromosome 2"/>
</dbReference>
<dbReference type="GO" id="GO:0005737">
    <property type="term" value="C:cytoplasm"/>
    <property type="evidence" value="ECO:0007669"/>
    <property type="project" value="UniProtKB-SubCell"/>
</dbReference>
<dbReference type="GO" id="GO:0043811">
    <property type="term" value="F:phosphate:acyl-[acyl carrier protein] acyltransferase activity"/>
    <property type="evidence" value="ECO:0007669"/>
    <property type="project" value="UniProtKB-UniRule"/>
</dbReference>
<dbReference type="GO" id="GO:0006633">
    <property type="term" value="P:fatty acid biosynthetic process"/>
    <property type="evidence" value="ECO:0007669"/>
    <property type="project" value="UniProtKB-UniRule"/>
</dbReference>
<dbReference type="GO" id="GO:0008654">
    <property type="term" value="P:phospholipid biosynthetic process"/>
    <property type="evidence" value="ECO:0007669"/>
    <property type="project" value="UniProtKB-KW"/>
</dbReference>
<dbReference type="FunFam" id="3.40.718.10:FF:000008">
    <property type="entry name" value="Phosphate acyltransferase"/>
    <property type="match status" value="1"/>
</dbReference>
<dbReference type="Gene3D" id="3.40.718.10">
    <property type="entry name" value="Isopropylmalate Dehydrogenase"/>
    <property type="match status" value="1"/>
</dbReference>
<dbReference type="HAMAP" id="MF_00019">
    <property type="entry name" value="PlsX"/>
    <property type="match status" value="1"/>
</dbReference>
<dbReference type="InterPro" id="IPR003664">
    <property type="entry name" value="FA_synthesis"/>
</dbReference>
<dbReference type="InterPro" id="IPR012281">
    <property type="entry name" value="Phospholipid_synth_PlsX-like"/>
</dbReference>
<dbReference type="NCBIfam" id="TIGR00182">
    <property type="entry name" value="plsX"/>
    <property type="match status" value="1"/>
</dbReference>
<dbReference type="PANTHER" id="PTHR30100">
    <property type="entry name" value="FATTY ACID/PHOSPHOLIPID SYNTHESIS PROTEIN PLSX"/>
    <property type="match status" value="1"/>
</dbReference>
<dbReference type="PANTHER" id="PTHR30100:SF1">
    <property type="entry name" value="PHOSPHATE ACYLTRANSFERASE"/>
    <property type="match status" value="1"/>
</dbReference>
<dbReference type="Pfam" id="PF02504">
    <property type="entry name" value="FA_synthesis"/>
    <property type="match status" value="1"/>
</dbReference>
<dbReference type="PIRSF" id="PIRSF002465">
    <property type="entry name" value="Phsphlp_syn_PlsX"/>
    <property type="match status" value="1"/>
</dbReference>
<dbReference type="SUPFAM" id="SSF53659">
    <property type="entry name" value="Isocitrate/Isopropylmalate dehydrogenase-like"/>
    <property type="match status" value="1"/>
</dbReference>
<organism>
    <name type="scientific">Vibrio cholerae serotype O1 (strain ATCC 39541 / Classical Ogawa 395 / O395)</name>
    <dbReference type="NCBI Taxonomy" id="345073"/>
    <lineage>
        <taxon>Bacteria</taxon>
        <taxon>Pseudomonadati</taxon>
        <taxon>Pseudomonadota</taxon>
        <taxon>Gammaproteobacteria</taxon>
        <taxon>Vibrionales</taxon>
        <taxon>Vibrionaceae</taxon>
        <taxon>Vibrio</taxon>
    </lineage>
</organism>
<keyword id="KW-0963">Cytoplasm</keyword>
<keyword id="KW-0444">Lipid biosynthesis</keyword>
<keyword id="KW-0443">Lipid metabolism</keyword>
<keyword id="KW-0594">Phospholipid biosynthesis</keyword>
<keyword id="KW-1208">Phospholipid metabolism</keyword>
<keyword id="KW-0808">Transferase</keyword>
<accession>A5F6P0</accession>
<accession>C3M276</accession>
<comment type="function">
    <text evidence="1">Catalyzes the reversible formation of acyl-phosphate (acyl-PO(4)) from acyl-[acyl-carrier-protein] (acyl-ACP). This enzyme utilizes acyl-ACP as fatty acyl donor, but not acyl-CoA.</text>
</comment>
<comment type="catalytic activity">
    <reaction evidence="1">
        <text>a fatty acyl-[ACP] + phosphate = an acyl phosphate + holo-[ACP]</text>
        <dbReference type="Rhea" id="RHEA:42292"/>
        <dbReference type="Rhea" id="RHEA-COMP:9685"/>
        <dbReference type="Rhea" id="RHEA-COMP:14125"/>
        <dbReference type="ChEBI" id="CHEBI:43474"/>
        <dbReference type="ChEBI" id="CHEBI:59918"/>
        <dbReference type="ChEBI" id="CHEBI:64479"/>
        <dbReference type="ChEBI" id="CHEBI:138651"/>
        <dbReference type="EC" id="2.3.1.274"/>
    </reaction>
</comment>
<comment type="pathway">
    <text evidence="1">Lipid metabolism; phospholipid metabolism.</text>
</comment>
<comment type="subunit">
    <text evidence="1">Homodimer. Probably interacts with PlsY.</text>
</comment>
<comment type="subcellular location">
    <subcellularLocation>
        <location evidence="1">Cytoplasm</location>
    </subcellularLocation>
    <text evidence="1">Associated with the membrane possibly through PlsY.</text>
</comment>
<comment type="similarity">
    <text evidence="1">Belongs to the PlsX family.</text>
</comment>